<organism>
    <name type="scientific">Pseudarthrobacter chlorophenolicus (strain ATCC 700700 / DSM 12829 / CIP 107037 / JCM 12360 / KCTC 9906 / NCIMB 13794 / A6)</name>
    <name type="common">Arthrobacter chlorophenolicus</name>
    <dbReference type="NCBI Taxonomy" id="452863"/>
    <lineage>
        <taxon>Bacteria</taxon>
        <taxon>Bacillati</taxon>
        <taxon>Actinomycetota</taxon>
        <taxon>Actinomycetes</taxon>
        <taxon>Micrococcales</taxon>
        <taxon>Micrococcaceae</taxon>
        <taxon>Pseudarthrobacter</taxon>
    </lineage>
</organism>
<gene>
    <name evidence="1" type="primary">nrdR</name>
    <name type="ordered locus">Achl_1586</name>
</gene>
<comment type="function">
    <text evidence="1">Negatively regulates transcription of bacterial ribonucleotide reductase nrd genes and operons by binding to NrdR-boxes.</text>
</comment>
<comment type="cofactor">
    <cofactor evidence="1">
        <name>Zn(2+)</name>
        <dbReference type="ChEBI" id="CHEBI:29105"/>
    </cofactor>
    <text evidence="1">Binds 1 zinc ion.</text>
</comment>
<comment type="similarity">
    <text evidence="1">Belongs to the NrdR family.</text>
</comment>
<feature type="chain" id="PRO_1000191777" description="Transcriptional repressor NrdR">
    <location>
        <begin position="1"/>
        <end position="167"/>
    </location>
</feature>
<feature type="domain" description="ATP-cone" evidence="1">
    <location>
        <begin position="46"/>
        <end position="136"/>
    </location>
</feature>
<feature type="zinc finger region" evidence="1">
    <location>
        <begin position="3"/>
        <end position="34"/>
    </location>
</feature>
<feature type="region of interest" description="Disordered" evidence="2">
    <location>
        <begin position="148"/>
        <end position="167"/>
    </location>
</feature>
<evidence type="ECO:0000255" key="1">
    <source>
        <dbReference type="HAMAP-Rule" id="MF_00440"/>
    </source>
</evidence>
<evidence type="ECO:0000256" key="2">
    <source>
        <dbReference type="SAM" id="MobiDB-lite"/>
    </source>
</evidence>
<accession>B8HGY5</accession>
<reference key="1">
    <citation type="submission" date="2009-01" db="EMBL/GenBank/DDBJ databases">
        <title>Complete sequence of chromosome of Arthrobacter chlorophenolicus A6.</title>
        <authorList>
            <consortium name="US DOE Joint Genome Institute"/>
            <person name="Lucas S."/>
            <person name="Copeland A."/>
            <person name="Lapidus A."/>
            <person name="Glavina del Rio T."/>
            <person name="Tice H."/>
            <person name="Bruce D."/>
            <person name="Goodwin L."/>
            <person name="Pitluck S."/>
            <person name="Goltsman E."/>
            <person name="Clum A."/>
            <person name="Larimer F."/>
            <person name="Land M."/>
            <person name="Hauser L."/>
            <person name="Kyrpides N."/>
            <person name="Mikhailova N."/>
            <person name="Jansson J."/>
            <person name="Richardson P."/>
        </authorList>
    </citation>
    <scope>NUCLEOTIDE SEQUENCE [LARGE SCALE GENOMIC DNA]</scope>
    <source>
        <strain>ATCC 700700 / DSM 12829 / CIP 107037 / JCM 12360 / KCTC 9906 / NCIMB 13794 / A6</strain>
    </source>
</reference>
<name>NRDR_PSECP</name>
<protein>
    <recommendedName>
        <fullName evidence="1">Transcriptional repressor NrdR</fullName>
    </recommendedName>
</protein>
<dbReference type="EMBL" id="CP001341">
    <property type="protein sequence ID" value="ACL39574.1"/>
    <property type="molecule type" value="Genomic_DNA"/>
</dbReference>
<dbReference type="RefSeq" id="WP_015936794.1">
    <property type="nucleotide sequence ID" value="NC_011886.1"/>
</dbReference>
<dbReference type="SMR" id="B8HGY5"/>
<dbReference type="STRING" id="452863.Achl_1586"/>
<dbReference type="KEGG" id="ach:Achl_1586"/>
<dbReference type="eggNOG" id="COG1327">
    <property type="taxonomic scope" value="Bacteria"/>
</dbReference>
<dbReference type="HOGENOM" id="CLU_108412_1_0_11"/>
<dbReference type="OrthoDB" id="9807461at2"/>
<dbReference type="Proteomes" id="UP000002505">
    <property type="component" value="Chromosome"/>
</dbReference>
<dbReference type="GO" id="GO:0005524">
    <property type="term" value="F:ATP binding"/>
    <property type="evidence" value="ECO:0007669"/>
    <property type="project" value="UniProtKB-KW"/>
</dbReference>
<dbReference type="GO" id="GO:0003677">
    <property type="term" value="F:DNA binding"/>
    <property type="evidence" value="ECO:0007669"/>
    <property type="project" value="UniProtKB-KW"/>
</dbReference>
<dbReference type="GO" id="GO:0008270">
    <property type="term" value="F:zinc ion binding"/>
    <property type="evidence" value="ECO:0007669"/>
    <property type="project" value="UniProtKB-UniRule"/>
</dbReference>
<dbReference type="GO" id="GO:0045892">
    <property type="term" value="P:negative regulation of DNA-templated transcription"/>
    <property type="evidence" value="ECO:0007669"/>
    <property type="project" value="UniProtKB-UniRule"/>
</dbReference>
<dbReference type="HAMAP" id="MF_00440">
    <property type="entry name" value="NrdR"/>
    <property type="match status" value="1"/>
</dbReference>
<dbReference type="InterPro" id="IPR005144">
    <property type="entry name" value="ATP-cone_dom"/>
</dbReference>
<dbReference type="InterPro" id="IPR055173">
    <property type="entry name" value="NrdR-like_N"/>
</dbReference>
<dbReference type="InterPro" id="IPR003796">
    <property type="entry name" value="RNR_NrdR-like"/>
</dbReference>
<dbReference type="NCBIfam" id="TIGR00244">
    <property type="entry name" value="transcriptional regulator NrdR"/>
    <property type="match status" value="1"/>
</dbReference>
<dbReference type="PANTHER" id="PTHR30455">
    <property type="entry name" value="TRANSCRIPTIONAL REPRESSOR NRDR"/>
    <property type="match status" value="1"/>
</dbReference>
<dbReference type="PANTHER" id="PTHR30455:SF2">
    <property type="entry name" value="TRANSCRIPTIONAL REPRESSOR NRDR"/>
    <property type="match status" value="1"/>
</dbReference>
<dbReference type="Pfam" id="PF03477">
    <property type="entry name" value="ATP-cone"/>
    <property type="match status" value="1"/>
</dbReference>
<dbReference type="Pfam" id="PF22811">
    <property type="entry name" value="Zn_ribbon_NrdR"/>
    <property type="match status" value="1"/>
</dbReference>
<dbReference type="PROSITE" id="PS51161">
    <property type="entry name" value="ATP_CONE"/>
    <property type="match status" value="1"/>
</dbReference>
<keyword id="KW-0067">ATP-binding</keyword>
<keyword id="KW-0238">DNA-binding</keyword>
<keyword id="KW-0479">Metal-binding</keyword>
<keyword id="KW-0547">Nucleotide-binding</keyword>
<keyword id="KW-0678">Repressor</keyword>
<keyword id="KW-0804">Transcription</keyword>
<keyword id="KW-0805">Transcription regulation</keyword>
<keyword id="KW-0862">Zinc</keyword>
<keyword id="KW-0863">Zinc-finger</keyword>
<sequence>MYCPFCRNPDSRVVDSRMADDGSAIRRRRQCPECGRRFTTVETTSLSVIKRSGVGEPFSRSKVINGVRKACQGRPVSEDDLAMLAQEVEEQIRASGAAEIDAHEVGLVILGPLQKLDEVAYLRFASVYQAFESLEDFEAAIAQLRHEAQEDAAERPATPRKPEKTSL</sequence>
<proteinExistence type="inferred from homology"/>